<organism>
    <name type="scientific">Actinobacillus pleuropneumoniae serotype 3 (strain JL03)</name>
    <dbReference type="NCBI Taxonomy" id="434271"/>
    <lineage>
        <taxon>Bacteria</taxon>
        <taxon>Pseudomonadati</taxon>
        <taxon>Pseudomonadota</taxon>
        <taxon>Gammaproteobacteria</taxon>
        <taxon>Pasteurellales</taxon>
        <taxon>Pasteurellaceae</taxon>
        <taxon>Actinobacillus</taxon>
    </lineage>
</organism>
<protein>
    <recommendedName>
        <fullName evidence="1">Formate-dependent phosphoribosylglycinamide formyltransferase</fullName>
        <ecNumber evidence="1">6.3.1.21</ecNumber>
    </recommendedName>
    <alternativeName>
        <fullName evidence="1">5'-phosphoribosylglycinamide transformylase 2</fullName>
    </alternativeName>
    <alternativeName>
        <fullName evidence="1">Formate-dependent GAR transformylase</fullName>
    </alternativeName>
    <alternativeName>
        <fullName evidence="1">GAR transformylase 2</fullName>
        <shortName evidence="1">GART 2</shortName>
    </alternativeName>
    <alternativeName>
        <fullName evidence="1">Non-folate glycinamide ribonucleotide transformylase</fullName>
    </alternativeName>
    <alternativeName>
        <fullName evidence="1">Phosphoribosylglycinamide formyltransferase 2</fullName>
    </alternativeName>
</protein>
<reference key="1">
    <citation type="journal article" date="2008" name="PLoS ONE">
        <title>Genome biology of Actinobacillus pleuropneumoniae JL03, an isolate of serotype 3 prevalent in China.</title>
        <authorList>
            <person name="Xu Z."/>
            <person name="Zhou Y."/>
            <person name="Li L."/>
            <person name="Zhou R."/>
            <person name="Xiao S."/>
            <person name="Wan Y."/>
            <person name="Zhang S."/>
            <person name="Wang K."/>
            <person name="Li W."/>
            <person name="Li L."/>
            <person name="Jin H."/>
            <person name="Kang M."/>
            <person name="Dalai B."/>
            <person name="Li T."/>
            <person name="Liu L."/>
            <person name="Cheng Y."/>
            <person name="Zhang L."/>
            <person name="Xu T."/>
            <person name="Zheng H."/>
            <person name="Pu S."/>
            <person name="Wang B."/>
            <person name="Gu W."/>
            <person name="Zhang X.L."/>
            <person name="Zhu G.-F."/>
            <person name="Wang S."/>
            <person name="Zhao G.-P."/>
            <person name="Chen H."/>
        </authorList>
    </citation>
    <scope>NUCLEOTIDE SEQUENCE [LARGE SCALE GENOMIC DNA]</scope>
    <source>
        <strain>JL03</strain>
    </source>
</reference>
<feature type="chain" id="PRO_1000186876" description="Formate-dependent phosphoribosylglycinamide formyltransferase">
    <location>
        <begin position="1"/>
        <end position="393"/>
    </location>
</feature>
<feature type="domain" description="ATP-grasp" evidence="1">
    <location>
        <begin position="119"/>
        <end position="308"/>
    </location>
</feature>
<feature type="binding site" evidence="1">
    <location>
        <begin position="22"/>
        <end position="23"/>
    </location>
    <ligand>
        <name>N(1)-(5-phospho-beta-D-ribosyl)glycinamide</name>
        <dbReference type="ChEBI" id="CHEBI:143788"/>
    </ligand>
</feature>
<feature type="binding site" evidence="1">
    <location>
        <position position="82"/>
    </location>
    <ligand>
        <name>N(1)-(5-phospho-beta-D-ribosyl)glycinamide</name>
        <dbReference type="ChEBI" id="CHEBI:143788"/>
    </ligand>
</feature>
<feature type="binding site" evidence="1">
    <location>
        <position position="114"/>
    </location>
    <ligand>
        <name>ATP</name>
        <dbReference type="ChEBI" id="CHEBI:30616"/>
    </ligand>
</feature>
<feature type="binding site" evidence="1">
    <location>
        <position position="155"/>
    </location>
    <ligand>
        <name>ATP</name>
        <dbReference type="ChEBI" id="CHEBI:30616"/>
    </ligand>
</feature>
<feature type="binding site" evidence="1">
    <location>
        <begin position="160"/>
        <end position="165"/>
    </location>
    <ligand>
        <name>ATP</name>
        <dbReference type="ChEBI" id="CHEBI:30616"/>
    </ligand>
</feature>
<feature type="binding site" evidence="1">
    <location>
        <begin position="195"/>
        <end position="198"/>
    </location>
    <ligand>
        <name>ATP</name>
        <dbReference type="ChEBI" id="CHEBI:30616"/>
    </ligand>
</feature>
<feature type="binding site" evidence="1">
    <location>
        <position position="203"/>
    </location>
    <ligand>
        <name>ATP</name>
        <dbReference type="ChEBI" id="CHEBI:30616"/>
    </ligand>
</feature>
<feature type="binding site" evidence="1">
    <location>
        <position position="267"/>
    </location>
    <ligand>
        <name>Mg(2+)</name>
        <dbReference type="ChEBI" id="CHEBI:18420"/>
    </ligand>
</feature>
<feature type="binding site" evidence="1">
    <location>
        <position position="279"/>
    </location>
    <ligand>
        <name>Mg(2+)</name>
        <dbReference type="ChEBI" id="CHEBI:18420"/>
    </ligand>
</feature>
<feature type="binding site" evidence="1">
    <location>
        <position position="286"/>
    </location>
    <ligand>
        <name>N(1)-(5-phospho-beta-D-ribosyl)glycinamide</name>
        <dbReference type="ChEBI" id="CHEBI:143788"/>
    </ligand>
</feature>
<feature type="binding site" evidence="1">
    <location>
        <position position="356"/>
    </location>
    <ligand>
        <name>N(1)-(5-phospho-beta-D-ribosyl)glycinamide</name>
        <dbReference type="ChEBI" id="CHEBI:143788"/>
    </ligand>
</feature>
<feature type="binding site" evidence="1">
    <location>
        <begin position="363"/>
        <end position="364"/>
    </location>
    <ligand>
        <name>N(1)-(5-phospho-beta-D-ribosyl)glycinamide</name>
        <dbReference type="ChEBI" id="CHEBI:143788"/>
    </ligand>
</feature>
<sequence length="393" mass="42931">MTTIGTPLRPNATKVMMLGSGELGKEVVIELQRLGVEVIAVDRYENAPAQQVAHRAYTISMLDGAALRALAEKEKPDFIVPEVEAIATATLVELEQEGYNVVPTAKATQLTMNREGIRRLAAEELGLKTSPYRFVDNLEDFKQAVAEIGIPCVVKPIMSSSGHGQSVIKSEDQIQQAWDYSQEGGRAGGGRVIVEGFIKFDYEITQLTVRHVNGTSFLAPIGHRQEDGDYRESWQPQAMSDLALKRAQETAERITTALGGRGIFGVELFVCGDEIIFNEVSPRPHDTGMVTMASQELSQFALHARAILGLPISEIYQISPAASKAIVVEGKSNNMTFGNLDKVLEEIGTNIRLFGKGEVNGHRRLGVILARDENTEKALAKAERAYAKLAVQL</sequence>
<accession>B0BQ46</accession>
<keyword id="KW-0067">ATP-binding</keyword>
<keyword id="KW-0436">Ligase</keyword>
<keyword id="KW-0460">Magnesium</keyword>
<keyword id="KW-0479">Metal-binding</keyword>
<keyword id="KW-0547">Nucleotide-binding</keyword>
<keyword id="KW-0658">Purine biosynthesis</keyword>
<evidence type="ECO:0000255" key="1">
    <source>
        <dbReference type="HAMAP-Rule" id="MF_01643"/>
    </source>
</evidence>
<name>PURT_ACTPJ</name>
<gene>
    <name evidence="1" type="primary">purT</name>
    <name type="ordered locus">APJL_1125</name>
</gene>
<comment type="function">
    <text evidence="1">Involved in the de novo purine biosynthesis. Catalyzes the transfer of formate to 5-phospho-ribosyl-glycinamide (GAR), producing 5-phospho-ribosyl-N-formylglycinamide (FGAR). Formate is provided by PurU via hydrolysis of 10-formyl-tetrahydrofolate.</text>
</comment>
<comment type="catalytic activity">
    <reaction evidence="1">
        <text>N(1)-(5-phospho-beta-D-ribosyl)glycinamide + formate + ATP = N(2)-formyl-N(1)-(5-phospho-beta-D-ribosyl)glycinamide + ADP + phosphate + H(+)</text>
        <dbReference type="Rhea" id="RHEA:24829"/>
        <dbReference type="ChEBI" id="CHEBI:15378"/>
        <dbReference type="ChEBI" id="CHEBI:15740"/>
        <dbReference type="ChEBI" id="CHEBI:30616"/>
        <dbReference type="ChEBI" id="CHEBI:43474"/>
        <dbReference type="ChEBI" id="CHEBI:143788"/>
        <dbReference type="ChEBI" id="CHEBI:147286"/>
        <dbReference type="ChEBI" id="CHEBI:456216"/>
        <dbReference type="EC" id="6.3.1.21"/>
    </reaction>
    <physiologicalReaction direction="left-to-right" evidence="1">
        <dbReference type="Rhea" id="RHEA:24830"/>
    </physiologicalReaction>
</comment>
<comment type="pathway">
    <text evidence="1">Purine metabolism; IMP biosynthesis via de novo pathway; N(2)-formyl-N(1)-(5-phospho-D-ribosyl)glycinamide from N(1)-(5-phospho-D-ribosyl)glycinamide (formate route): step 1/1.</text>
</comment>
<comment type="subunit">
    <text evidence="1">Homodimer.</text>
</comment>
<comment type="similarity">
    <text evidence="1">Belongs to the PurK/PurT family.</text>
</comment>
<dbReference type="EC" id="6.3.1.21" evidence="1"/>
<dbReference type="EMBL" id="CP000687">
    <property type="protein sequence ID" value="ABY69681.1"/>
    <property type="molecule type" value="Genomic_DNA"/>
</dbReference>
<dbReference type="RefSeq" id="WP_012263102.1">
    <property type="nucleotide sequence ID" value="NC_010278.1"/>
</dbReference>
<dbReference type="SMR" id="B0BQ46"/>
<dbReference type="KEGG" id="apj:APJL_1125"/>
<dbReference type="HOGENOM" id="CLU_011534_1_3_6"/>
<dbReference type="UniPathway" id="UPA00074">
    <property type="reaction ID" value="UER00127"/>
</dbReference>
<dbReference type="Proteomes" id="UP000008547">
    <property type="component" value="Chromosome"/>
</dbReference>
<dbReference type="GO" id="GO:0005829">
    <property type="term" value="C:cytosol"/>
    <property type="evidence" value="ECO:0007669"/>
    <property type="project" value="TreeGrafter"/>
</dbReference>
<dbReference type="GO" id="GO:0005524">
    <property type="term" value="F:ATP binding"/>
    <property type="evidence" value="ECO:0007669"/>
    <property type="project" value="UniProtKB-UniRule"/>
</dbReference>
<dbReference type="GO" id="GO:0000287">
    <property type="term" value="F:magnesium ion binding"/>
    <property type="evidence" value="ECO:0007669"/>
    <property type="project" value="InterPro"/>
</dbReference>
<dbReference type="GO" id="GO:0043815">
    <property type="term" value="F:phosphoribosylglycinamide formyltransferase 2 activity"/>
    <property type="evidence" value="ECO:0007669"/>
    <property type="project" value="UniProtKB-UniRule"/>
</dbReference>
<dbReference type="GO" id="GO:0004644">
    <property type="term" value="F:phosphoribosylglycinamide formyltransferase activity"/>
    <property type="evidence" value="ECO:0007669"/>
    <property type="project" value="InterPro"/>
</dbReference>
<dbReference type="GO" id="GO:0006189">
    <property type="term" value="P:'de novo' IMP biosynthetic process"/>
    <property type="evidence" value="ECO:0007669"/>
    <property type="project" value="UniProtKB-UniRule"/>
</dbReference>
<dbReference type="FunFam" id="3.30.1490.20:FF:000013">
    <property type="entry name" value="Formate-dependent phosphoribosylglycinamide formyltransferase"/>
    <property type="match status" value="1"/>
</dbReference>
<dbReference type="FunFam" id="3.40.50.20:FF:000007">
    <property type="entry name" value="Formate-dependent phosphoribosylglycinamide formyltransferase"/>
    <property type="match status" value="1"/>
</dbReference>
<dbReference type="Gene3D" id="3.40.50.20">
    <property type="match status" value="1"/>
</dbReference>
<dbReference type="Gene3D" id="3.30.1490.20">
    <property type="entry name" value="ATP-grasp fold, A domain"/>
    <property type="match status" value="1"/>
</dbReference>
<dbReference type="Gene3D" id="3.30.470.20">
    <property type="entry name" value="ATP-grasp fold, B domain"/>
    <property type="match status" value="1"/>
</dbReference>
<dbReference type="HAMAP" id="MF_01643">
    <property type="entry name" value="PurT"/>
    <property type="match status" value="1"/>
</dbReference>
<dbReference type="InterPro" id="IPR011761">
    <property type="entry name" value="ATP-grasp"/>
</dbReference>
<dbReference type="InterPro" id="IPR003135">
    <property type="entry name" value="ATP-grasp_carboxylate-amine"/>
</dbReference>
<dbReference type="InterPro" id="IPR013815">
    <property type="entry name" value="ATP_grasp_subdomain_1"/>
</dbReference>
<dbReference type="InterPro" id="IPR016185">
    <property type="entry name" value="PreATP-grasp_dom_sf"/>
</dbReference>
<dbReference type="InterPro" id="IPR005862">
    <property type="entry name" value="PurT"/>
</dbReference>
<dbReference type="InterPro" id="IPR054350">
    <property type="entry name" value="PurT/PurK_preATP-grasp"/>
</dbReference>
<dbReference type="InterPro" id="IPR048740">
    <property type="entry name" value="PurT_C"/>
</dbReference>
<dbReference type="NCBIfam" id="NF006766">
    <property type="entry name" value="PRK09288.1"/>
    <property type="match status" value="1"/>
</dbReference>
<dbReference type="NCBIfam" id="TIGR01142">
    <property type="entry name" value="purT"/>
    <property type="match status" value="1"/>
</dbReference>
<dbReference type="PANTHER" id="PTHR43055">
    <property type="entry name" value="FORMATE-DEPENDENT PHOSPHORIBOSYLGLYCINAMIDE FORMYLTRANSFERASE"/>
    <property type="match status" value="1"/>
</dbReference>
<dbReference type="PANTHER" id="PTHR43055:SF1">
    <property type="entry name" value="FORMATE-DEPENDENT PHOSPHORIBOSYLGLYCINAMIDE FORMYLTRANSFERASE"/>
    <property type="match status" value="1"/>
</dbReference>
<dbReference type="Pfam" id="PF02222">
    <property type="entry name" value="ATP-grasp"/>
    <property type="match status" value="1"/>
</dbReference>
<dbReference type="Pfam" id="PF21244">
    <property type="entry name" value="PurT_C"/>
    <property type="match status" value="1"/>
</dbReference>
<dbReference type="Pfam" id="PF22660">
    <property type="entry name" value="RS_preATP-grasp-like"/>
    <property type="match status" value="1"/>
</dbReference>
<dbReference type="SUPFAM" id="SSF56059">
    <property type="entry name" value="Glutathione synthetase ATP-binding domain-like"/>
    <property type="match status" value="1"/>
</dbReference>
<dbReference type="SUPFAM" id="SSF52440">
    <property type="entry name" value="PreATP-grasp domain"/>
    <property type="match status" value="1"/>
</dbReference>
<dbReference type="PROSITE" id="PS50975">
    <property type="entry name" value="ATP_GRASP"/>
    <property type="match status" value="1"/>
</dbReference>
<proteinExistence type="inferred from homology"/>